<proteinExistence type="evidence at protein level"/>
<gene>
    <name type="primary">Mvb12b</name>
    <name type="synonym">Fam125b</name>
</gene>
<protein>
    <recommendedName>
        <fullName>Multivesicular body subunit 12B</fullName>
    </recommendedName>
    <alternativeName>
        <fullName>ESCRT-I complex subunit MVB12B</fullName>
    </alternativeName>
    <alternativeName>
        <fullName>Protein FAM125B</fullName>
    </alternativeName>
</protein>
<accession>Q6KAU4</accession>
<accession>A2ARF1</accession>
<accession>Q6PB42</accession>
<keyword id="KW-0967">Endosome</keyword>
<keyword id="KW-0472">Membrane</keyword>
<keyword id="KW-0597">Phosphoprotein</keyword>
<keyword id="KW-0653">Protein transport</keyword>
<keyword id="KW-1185">Reference proteome</keyword>
<keyword id="KW-0813">Transport</keyword>
<organism>
    <name type="scientific">Mus musculus</name>
    <name type="common">Mouse</name>
    <dbReference type="NCBI Taxonomy" id="10090"/>
    <lineage>
        <taxon>Eukaryota</taxon>
        <taxon>Metazoa</taxon>
        <taxon>Chordata</taxon>
        <taxon>Craniata</taxon>
        <taxon>Vertebrata</taxon>
        <taxon>Euteleostomi</taxon>
        <taxon>Mammalia</taxon>
        <taxon>Eutheria</taxon>
        <taxon>Euarchontoglires</taxon>
        <taxon>Glires</taxon>
        <taxon>Rodentia</taxon>
        <taxon>Myomorpha</taxon>
        <taxon>Muroidea</taxon>
        <taxon>Muridae</taxon>
        <taxon>Murinae</taxon>
        <taxon>Mus</taxon>
        <taxon>Mus</taxon>
    </lineage>
</organism>
<feature type="chain" id="PRO_0000249075" description="Multivesicular body subunit 12B">
    <location>
        <begin position="1"/>
        <end position="317"/>
    </location>
</feature>
<feature type="domain" description="MABP" evidence="4">
    <location>
        <begin position="45"/>
        <end position="191"/>
    </location>
</feature>
<feature type="domain" description="UMA" evidence="3">
    <location>
        <begin position="252"/>
        <end position="301"/>
    </location>
</feature>
<feature type="region of interest" description="Disordered" evidence="5">
    <location>
        <begin position="1"/>
        <end position="49"/>
    </location>
</feature>
<feature type="region of interest" description="Disordered" evidence="5">
    <location>
        <begin position="193"/>
        <end position="218"/>
    </location>
</feature>
<feature type="region of interest" description="Disordered" evidence="5">
    <location>
        <begin position="297"/>
        <end position="317"/>
    </location>
</feature>
<feature type="compositionally biased region" description="Pro residues" evidence="5">
    <location>
        <begin position="13"/>
        <end position="22"/>
    </location>
</feature>
<feature type="compositionally biased region" description="Low complexity" evidence="5">
    <location>
        <begin position="198"/>
        <end position="214"/>
    </location>
</feature>
<feature type="modified residue" description="Phosphoserine" evidence="2">
    <location>
        <position position="99"/>
    </location>
</feature>
<feature type="modified residue" description="Phosphothreonine" evidence="2">
    <location>
        <position position="120"/>
    </location>
</feature>
<feature type="modified residue" description="Phosphothreonine" evidence="2">
    <location>
        <position position="202"/>
    </location>
</feature>
<feature type="modified residue" description="Phosphothreonine" evidence="2">
    <location>
        <position position="203"/>
    </location>
</feature>
<feature type="modified residue" description="Phosphoserine" evidence="7">
    <location>
        <position position="222"/>
    </location>
</feature>
<feature type="modified residue" description="Phosphoserine" evidence="2">
    <location>
        <position position="307"/>
    </location>
</feature>
<sequence>MRSCFCVRRSRDPPPPQPPPPQRGTDQATMPEVKELSEALPETPMDPITGVGVVASRNRAPTGYDVVAQTADGVDADLWKDGLFKSKVTRYLCFTRSFSKENSHLGNVLVDMKLIDVKDTLPVGFIPIQETVDTQEVVFRKKRLCIKFIPRDSTEAAICDIRIMGRTKQAPPQYTFIGELNSMGIWYRMGRVPRNHDSSQPTTPSQSSASSTPAPNLPRHISLTLPATFRGRNNTSTDYEYQLSNLYAISAMDGVPFMISEKFSCIPESMQPFDLLGITIKSLAEIEKEYEYSFRTEQSAAARLPPSPTRCQQIPQS</sequence>
<reference key="1">
    <citation type="journal article" date="2004" name="DNA Res.">
        <title>Prediction of the coding sequences of mouse homologues of FLJ genes: the complete nucleotide sequences of 110 mouse FLJ-homologous cDNAs identified by screening of terminal sequences of cDNA clones randomly sampled from size-fractionated libraries.</title>
        <authorList>
            <person name="Okazaki N."/>
            <person name="Kikuno R."/>
            <person name="Ohara R."/>
            <person name="Inamoto S."/>
            <person name="Koseki H."/>
            <person name="Hiraoka S."/>
            <person name="Saga Y."/>
            <person name="Kitamura H."/>
            <person name="Nakagawa T."/>
            <person name="Nagase T."/>
            <person name="Ohara O."/>
            <person name="Koga H."/>
        </authorList>
    </citation>
    <scope>NUCLEOTIDE SEQUENCE [LARGE SCALE MRNA]</scope>
    <source>
        <tissue>Fetal brain</tissue>
    </source>
</reference>
<reference key="2">
    <citation type="journal article" date="2009" name="PLoS Biol.">
        <title>Lineage-specific biology revealed by a finished genome assembly of the mouse.</title>
        <authorList>
            <person name="Church D.M."/>
            <person name="Goodstadt L."/>
            <person name="Hillier L.W."/>
            <person name="Zody M.C."/>
            <person name="Goldstein S."/>
            <person name="She X."/>
            <person name="Bult C.J."/>
            <person name="Agarwala R."/>
            <person name="Cherry J.L."/>
            <person name="DiCuccio M."/>
            <person name="Hlavina W."/>
            <person name="Kapustin Y."/>
            <person name="Meric P."/>
            <person name="Maglott D."/>
            <person name="Birtle Z."/>
            <person name="Marques A.C."/>
            <person name="Graves T."/>
            <person name="Zhou S."/>
            <person name="Teague B."/>
            <person name="Potamousis K."/>
            <person name="Churas C."/>
            <person name="Place M."/>
            <person name="Herschleb J."/>
            <person name="Runnheim R."/>
            <person name="Forrest D."/>
            <person name="Amos-Landgraf J."/>
            <person name="Schwartz D.C."/>
            <person name="Cheng Z."/>
            <person name="Lindblad-Toh K."/>
            <person name="Eichler E.E."/>
            <person name="Ponting C.P."/>
        </authorList>
    </citation>
    <scope>NUCLEOTIDE SEQUENCE [LARGE SCALE GENOMIC DNA]</scope>
    <source>
        <strain>C57BL/6J</strain>
    </source>
</reference>
<reference key="3">
    <citation type="journal article" date="2004" name="Genome Res.">
        <title>The status, quality, and expansion of the NIH full-length cDNA project: the Mammalian Gene Collection (MGC).</title>
        <authorList>
            <consortium name="The MGC Project Team"/>
        </authorList>
    </citation>
    <scope>NUCLEOTIDE SEQUENCE [LARGE SCALE MRNA]</scope>
    <source>
        <strain>C57BL/6J</strain>
        <tissue>Brain</tissue>
    </source>
</reference>
<reference key="4">
    <citation type="journal article" date="2010" name="Cell">
        <title>A tissue-specific atlas of mouse protein phosphorylation and expression.</title>
        <authorList>
            <person name="Huttlin E.L."/>
            <person name="Jedrychowski M.P."/>
            <person name="Elias J.E."/>
            <person name="Goswami T."/>
            <person name="Rad R."/>
            <person name="Beausoleil S.A."/>
            <person name="Villen J."/>
            <person name="Haas W."/>
            <person name="Sowa M.E."/>
            <person name="Gygi S.P."/>
        </authorList>
    </citation>
    <scope>PHOSPHORYLATION [LARGE SCALE ANALYSIS] AT SER-222</scope>
    <scope>IDENTIFICATION BY MASS SPECTROMETRY [LARGE SCALE ANALYSIS]</scope>
    <source>
        <tissue>Brain</tissue>
        <tissue>Heart</tissue>
        <tissue>Lung</tissue>
    </source>
</reference>
<dbReference type="EMBL" id="AK131113">
    <property type="protein sequence ID" value="BAD21363.1"/>
    <property type="status" value="ALT_INIT"/>
    <property type="molecule type" value="mRNA"/>
</dbReference>
<dbReference type="EMBL" id="AL845360">
    <property type="status" value="NOT_ANNOTATED_CDS"/>
    <property type="molecule type" value="Genomic_DNA"/>
</dbReference>
<dbReference type="EMBL" id="BX649361">
    <property type="status" value="NOT_ANNOTATED_CDS"/>
    <property type="molecule type" value="Genomic_DNA"/>
</dbReference>
<dbReference type="EMBL" id="BC049129">
    <property type="protein sequence ID" value="AAH49129.2"/>
    <property type="molecule type" value="mRNA"/>
</dbReference>
<dbReference type="EMBL" id="BC059907">
    <property type="protein sequence ID" value="AAH59907.1"/>
    <property type="molecule type" value="mRNA"/>
</dbReference>
<dbReference type="CCDS" id="CCDS15946.1"/>
<dbReference type="RefSeq" id="NP_780393.2">
    <property type="nucleotide sequence ID" value="NM_175184.4"/>
</dbReference>
<dbReference type="SMR" id="Q6KAU4"/>
<dbReference type="BioGRID" id="215427">
    <property type="interactions" value="3"/>
</dbReference>
<dbReference type="FunCoup" id="Q6KAU4">
    <property type="interactions" value="2339"/>
</dbReference>
<dbReference type="STRING" id="10090.ENSMUSP00000048901"/>
<dbReference type="GlyGen" id="Q6KAU4">
    <property type="glycosylation" value="1 site"/>
</dbReference>
<dbReference type="iPTMnet" id="Q6KAU4"/>
<dbReference type="PhosphoSitePlus" id="Q6KAU4"/>
<dbReference type="SwissPalm" id="Q6KAU4"/>
<dbReference type="jPOST" id="Q6KAU4"/>
<dbReference type="PaxDb" id="10090-ENSMUSP00000048901"/>
<dbReference type="PeptideAtlas" id="Q6KAU4"/>
<dbReference type="ProteomicsDB" id="292273"/>
<dbReference type="Pumba" id="Q6KAU4"/>
<dbReference type="Antibodypedia" id="56615">
    <property type="antibodies" value="22 antibodies from 10 providers"/>
</dbReference>
<dbReference type="DNASU" id="72543"/>
<dbReference type="Ensembl" id="ENSMUST00000041555.10">
    <property type="protein sequence ID" value="ENSMUSP00000048901.4"/>
    <property type="gene ID" value="ENSMUSG00000038740.10"/>
</dbReference>
<dbReference type="GeneID" id="72543"/>
<dbReference type="KEGG" id="mmu:72543"/>
<dbReference type="UCSC" id="uc008jib.1">
    <property type="organism name" value="mouse"/>
</dbReference>
<dbReference type="AGR" id="MGI:1919793"/>
<dbReference type="CTD" id="89853"/>
<dbReference type="MGI" id="MGI:1919793">
    <property type="gene designation" value="Mvb12b"/>
</dbReference>
<dbReference type="VEuPathDB" id="HostDB:ENSMUSG00000038740"/>
<dbReference type="eggNOG" id="KOG4000">
    <property type="taxonomic scope" value="Eukaryota"/>
</dbReference>
<dbReference type="GeneTree" id="ENSGT00940000155945"/>
<dbReference type="HOGENOM" id="CLU_064823_1_0_1"/>
<dbReference type="InParanoid" id="Q6KAU4"/>
<dbReference type="OMA" id="CFCLKRG"/>
<dbReference type="OrthoDB" id="6021306at2759"/>
<dbReference type="PhylomeDB" id="Q6KAU4"/>
<dbReference type="TreeFam" id="TF314477"/>
<dbReference type="Reactome" id="R-MMU-917729">
    <property type="pathway name" value="Endosomal Sorting Complex Required For Transport (ESCRT)"/>
</dbReference>
<dbReference type="BioGRID-ORCS" id="72543">
    <property type="hits" value="4 hits in 77 CRISPR screens"/>
</dbReference>
<dbReference type="ChiTaRS" id="Mvb12b">
    <property type="organism name" value="mouse"/>
</dbReference>
<dbReference type="PRO" id="PR:Q6KAU4"/>
<dbReference type="Proteomes" id="UP000000589">
    <property type="component" value="Chromosome 2"/>
</dbReference>
<dbReference type="RNAct" id="Q6KAU4">
    <property type="molecule type" value="protein"/>
</dbReference>
<dbReference type="Bgee" id="ENSMUSG00000038740">
    <property type="expression patterns" value="Expressed in rostral migratory stream and 246 other cell types or tissues"/>
</dbReference>
<dbReference type="ExpressionAtlas" id="Q6KAU4">
    <property type="expression patterns" value="baseline and differential"/>
</dbReference>
<dbReference type="GO" id="GO:0005829">
    <property type="term" value="C:cytosol"/>
    <property type="evidence" value="ECO:0007669"/>
    <property type="project" value="Ensembl"/>
</dbReference>
<dbReference type="GO" id="GO:0005769">
    <property type="term" value="C:early endosome"/>
    <property type="evidence" value="ECO:0007669"/>
    <property type="project" value="Ensembl"/>
</dbReference>
<dbReference type="GO" id="GO:0000813">
    <property type="term" value="C:ESCRT I complex"/>
    <property type="evidence" value="ECO:0007669"/>
    <property type="project" value="Ensembl"/>
</dbReference>
<dbReference type="GO" id="GO:0031902">
    <property type="term" value="C:late endosome membrane"/>
    <property type="evidence" value="ECO:0007669"/>
    <property type="project" value="UniProtKB-SubCell"/>
</dbReference>
<dbReference type="GO" id="GO:0005634">
    <property type="term" value="C:nucleus"/>
    <property type="evidence" value="ECO:0007669"/>
    <property type="project" value="Ensembl"/>
</dbReference>
<dbReference type="GO" id="GO:0005886">
    <property type="term" value="C:plasma membrane"/>
    <property type="evidence" value="ECO:0007669"/>
    <property type="project" value="Ensembl"/>
</dbReference>
<dbReference type="GO" id="GO:0008289">
    <property type="term" value="F:lipid binding"/>
    <property type="evidence" value="ECO:0007669"/>
    <property type="project" value="Ensembl"/>
</dbReference>
<dbReference type="GO" id="GO:0015031">
    <property type="term" value="P:protein transport"/>
    <property type="evidence" value="ECO:0007669"/>
    <property type="project" value="UniProtKB-KW"/>
</dbReference>
<dbReference type="GO" id="GO:0042058">
    <property type="term" value="P:regulation of epidermal growth factor receptor signaling pathway"/>
    <property type="evidence" value="ECO:0007669"/>
    <property type="project" value="Ensembl"/>
</dbReference>
<dbReference type="GO" id="GO:0046755">
    <property type="term" value="P:viral budding"/>
    <property type="evidence" value="ECO:0007669"/>
    <property type="project" value="Ensembl"/>
</dbReference>
<dbReference type="GO" id="GO:0019075">
    <property type="term" value="P:virus maturation"/>
    <property type="evidence" value="ECO:0007669"/>
    <property type="project" value="Ensembl"/>
</dbReference>
<dbReference type="FunFam" id="2.100.10.50:FF:000002">
    <property type="entry name" value="Multivesicular body subunit 12B"/>
    <property type="match status" value="1"/>
</dbReference>
<dbReference type="Gene3D" id="2.100.10.50">
    <property type="match status" value="1"/>
</dbReference>
<dbReference type="InterPro" id="IPR023341">
    <property type="entry name" value="MABP"/>
</dbReference>
<dbReference type="InterPro" id="IPR018798">
    <property type="entry name" value="MVB12A/B"/>
</dbReference>
<dbReference type="InterPro" id="IPR040297">
    <property type="entry name" value="MVB12B"/>
</dbReference>
<dbReference type="InterPro" id="IPR023340">
    <property type="entry name" value="UMA"/>
</dbReference>
<dbReference type="PANTHER" id="PTHR31547">
    <property type="entry name" value="MULTIVESICULAR BODY SUBUNIT 12B"/>
    <property type="match status" value="1"/>
</dbReference>
<dbReference type="PANTHER" id="PTHR31547:SF1">
    <property type="entry name" value="MULTIVESICULAR BODY SUBUNIT 12B"/>
    <property type="match status" value="1"/>
</dbReference>
<dbReference type="Pfam" id="PF10240">
    <property type="entry name" value="DUF2464"/>
    <property type="match status" value="1"/>
</dbReference>
<dbReference type="PROSITE" id="PS51498">
    <property type="entry name" value="MABP"/>
    <property type="match status" value="1"/>
</dbReference>
<dbReference type="PROSITE" id="PS51497">
    <property type="entry name" value="UMA"/>
    <property type="match status" value="1"/>
</dbReference>
<name>MB12B_MOUSE</name>
<comment type="function">
    <text evidence="1">Component of the ESCRT-I complex, a regulator of vesicular trafficking process. Required for the sorting of endocytic ubiquitinated cargos into multivesicular bodies (By similarity).</text>
</comment>
<comment type="subunit">
    <text evidence="1">Component of the ESCRT-I complex (endosomal sorting complex required for transport I) which consists of TSG101, VPS28, a VPS37 protein (VPS37A to -D) and MVB12A or MVB12B in a 1:1:1:1 stoichiometry. Interacts with TSG101; the association appears to be mediated by the TSG101-VPS37 binary subcomplex. Interacts with VPS28. Interacts with VPS37B; the association appears to be mediated by the TSG101-VPS37 binary subcomplex. Interacts with VPS37C; the association appears to be mediated by the TSG101-VPS37 binary subcomplex (By similarity).</text>
</comment>
<comment type="subcellular location">
    <subcellularLocation>
        <location evidence="1">Endosome</location>
    </subcellularLocation>
    <subcellularLocation>
        <location evidence="1">Late endosome membrane</location>
        <topology evidence="1">Peripheral membrane protein</topology>
    </subcellularLocation>
</comment>
<comment type="similarity">
    <text evidence="6">Belongs to the MVB12 family.</text>
</comment>
<comment type="sequence caution" evidence="6">
    <conflict type="erroneous initiation">
        <sequence resource="EMBL-CDS" id="BAD21363"/>
    </conflict>
</comment>
<evidence type="ECO:0000250" key="1"/>
<evidence type="ECO:0000250" key="2">
    <source>
        <dbReference type="UniProtKB" id="Q9H7P6"/>
    </source>
</evidence>
<evidence type="ECO:0000255" key="3">
    <source>
        <dbReference type="PROSITE-ProRule" id="PRU00830"/>
    </source>
</evidence>
<evidence type="ECO:0000255" key="4">
    <source>
        <dbReference type="PROSITE-ProRule" id="PRU00831"/>
    </source>
</evidence>
<evidence type="ECO:0000256" key="5">
    <source>
        <dbReference type="SAM" id="MobiDB-lite"/>
    </source>
</evidence>
<evidence type="ECO:0000305" key="6"/>
<evidence type="ECO:0007744" key="7">
    <source>
    </source>
</evidence>